<protein>
    <recommendedName>
        <fullName>Signal peptidase complex catalytic subunit SEC11</fullName>
        <ecNumber evidence="1">3.4.21.89</ecNumber>
    </recommendedName>
    <alternativeName>
        <fullName>Signal peptidase I</fullName>
    </alternativeName>
</protein>
<keyword id="KW-0256">Endoplasmic reticulum</keyword>
<keyword id="KW-0378">Hydrolase</keyword>
<keyword id="KW-0472">Membrane</keyword>
<keyword id="KW-0645">Protease</keyword>
<keyword id="KW-1185">Reference proteome</keyword>
<keyword id="KW-0735">Signal-anchor</keyword>
<keyword id="KW-0812">Transmembrane</keyword>
<keyword id="KW-1133">Transmembrane helix</keyword>
<proteinExistence type="inferred from homology"/>
<name>SEC11_PYRO7</name>
<organism>
    <name type="scientific">Pyricularia oryzae (strain 70-15 / ATCC MYA-4617 / FGSC 8958)</name>
    <name type="common">Rice blast fungus</name>
    <name type="synonym">Magnaporthe oryzae</name>
    <dbReference type="NCBI Taxonomy" id="242507"/>
    <lineage>
        <taxon>Eukaryota</taxon>
        <taxon>Fungi</taxon>
        <taxon>Dikarya</taxon>
        <taxon>Ascomycota</taxon>
        <taxon>Pezizomycotina</taxon>
        <taxon>Sordariomycetes</taxon>
        <taxon>Sordariomycetidae</taxon>
        <taxon>Magnaporthales</taxon>
        <taxon>Pyriculariaceae</taxon>
        <taxon>Pyricularia</taxon>
    </lineage>
</organism>
<sequence length="172" mass="19043">MLSSLGNPRQAATQLLNFALILSTAFMMWKGLSVATDSPSPIVVVLSGSMEPAFQRGDLLFLWNRNIVQETDVGEIVVYNVKGKDIPIVHRIVRKFGAGPKAKLLTKGDNNAADDTELYAKDQDYLERKDIIGSVVAYIPFVGYVTIMLSEHPWMKTAMLGIMGLMVVLQRE</sequence>
<accession>A4RGA1</accession>
<accession>G4NEG3</accession>
<reference key="1">
    <citation type="journal article" date="2005" name="Nature">
        <title>The genome sequence of the rice blast fungus Magnaporthe grisea.</title>
        <authorList>
            <person name="Dean R.A."/>
            <person name="Talbot N.J."/>
            <person name="Ebbole D.J."/>
            <person name="Farman M.L."/>
            <person name="Mitchell T.K."/>
            <person name="Orbach M.J."/>
            <person name="Thon M.R."/>
            <person name="Kulkarni R."/>
            <person name="Xu J.-R."/>
            <person name="Pan H."/>
            <person name="Read N.D."/>
            <person name="Lee Y.-H."/>
            <person name="Carbone I."/>
            <person name="Brown D."/>
            <person name="Oh Y.Y."/>
            <person name="Donofrio N."/>
            <person name="Jeong J.S."/>
            <person name="Soanes D.M."/>
            <person name="Djonovic S."/>
            <person name="Kolomiets E."/>
            <person name="Rehmeyer C."/>
            <person name="Li W."/>
            <person name="Harding M."/>
            <person name="Kim S."/>
            <person name="Lebrun M.-H."/>
            <person name="Bohnert H."/>
            <person name="Coughlan S."/>
            <person name="Butler J."/>
            <person name="Calvo S.E."/>
            <person name="Ma L.-J."/>
            <person name="Nicol R."/>
            <person name="Purcell S."/>
            <person name="Nusbaum C."/>
            <person name="Galagan J.E."/>
            <person name="Birren B.W."/>
        </authorList>
    </citation>
    <scope>NUCLEOTIDE SEQUENCE [LARGE SCALE GENOMIC DNA]</scope>
    <source>
        <strain>70-15 / ATCC MYA-4617 / FGSC 8958</strain>
    </source>
</reference>
<dbReference type="EC" id="3.4.21.89" evidence="1"/>
<dbReference type="EMBL" id="CM001235">
    <property type="protein sequence ID" value="EHA49440.1"/>
    <property type="molecule type" value="Genomic_DNA"/>
</dbReference>
<dbReference type="RefSeq" id="XP_003719024.1">
    <property type="nucleotide sequence ID" value="XM_003718976.1"/>
</dbReference>
<dbReference type="SMR" id="A4RGA1"/>
<dbReference type="FunCoup" id="A4RGA1">
    <property type="interactions" value="669"/>
</dbReference>
<dbReference type="STRING" id="242507.A4RGA1"/>
<dbReference type="MEROPS" id="S26.010"/>
<dbReference type="EnsemblFungi" id="MGG_17533T0">
    <property type="protein sequence ID" value="MGG_17533T0"/>
    <property type="gene ID" value="MGG_17533"/>
</dbReference>
<dbReference type="KEGG" id="mgr:MGG_17533"/>
<dbReference type="VEuPathDB" id="FungiDB:MGG_17533"/>
<dbReference type="eggNOG" id="KOG3342">
    <property type="taxonomic scope" value="Eukaryota"/>
</dbReference>
<dbReference type="HOGENOM" id="CLU_089996_0_1_1"/>
<dbReference type="InParanoid" id="A4RGA1"/>
<dbReference type="OMA" id="ILMNEYP"/>
<dbReference type="OrthoDB" id="10257561at2759"/>
<dbReference type="Proteomes" id="UP000009058">
    <property type="component" value="Chromosome 5"/>
</dbReference>
<dbReference type="GO" id="GO:0005787">
    <property type="term" value="C:signal peptidase complex"/>
    <property type="evidence" value="ECO:0007669"/>
    <property type="project" value="EnsemblFungi"/>
</dbReference>
<dbReference type="GO" id="GO:0004252">
    <property type="term" value="F:serine-type endopeptidase activity"/>
    <property type="evidence" value="ECO:0007669"/>
    <property type="project" value="UniProtKB-EC"/>
</dbReference>
<dbReference type="GO" id="GO:0045047">
    <property type="term" value="P:protein targeting to ER"/>
    <property type="evidence" value="ECO:0007669"/>
    <property type="project" value="EnsemblFungi"/>
</dbReference>
<dbReference type="GO" id="GO:0006465">
    <property type="term" value="P:signal peptide processing"/>
    <property type="evidence" value="ECO:0007669"/>
    <property type="project" value="EnsemblFungi"/>
</dbReference>
<dbReference type="CDD" id="cd06530">
    <property type="entry name" value="S26_SPase_I"/>
    <property type="match status" value="1"/>
</dbReference>
<dbReference type="Gene3D" id="2.10.109.10">
    <property type="entry name" value="Umud Fragment, subunit A"/>
    <property type="match status" value="1"/>
</dbReference>
<dbReference type="InterPro" id="IPR036286">
    <property type="entry name" value="LexA/Signal_pep-like_sf"/>
</dbReference>
<dbReference type="InterPro" id="IPR019756">
    <property type="entry name" value="Pept_S26A_signal_pept_1_Ser-AS"/>
</dbReference>
<dbReference type="InterPro" id="IPR019533">
    <property type="entry name" value="Peptidase_S26"/>
</dbReference>
<dbReference type="InterPro" id="IPR001733">
    <property type="entry name" value="Peptidase_S26B"/>
</dbReference>
<dbReference type="NCBIfam" id="TIGR02228">
    <property type="entry name" value="sigpep_I_arch"/>
    <property type="match status" value="1"/>
</dbReference>
<dbReference type="PANTHER" id="PTHR10806">
    <property type="entry name" value="SIGNAL PEPTIDASE COMPLEX CATALYTIC SUBUNIT SEC11"/>
    <property type="match status" value="1"/>
</dbReference>
<dbReference type="PANTHER" id="PTHR10806:SF6">
    <property type="entry name" value="SIGNAL PEPTIDASE COMPLEX CATALYTIC SUBUNIT SEC11"/>
    <property type="match status" value="1"/>
</dbReference>
<dbReference type="PRINTS" id="PR00728">
    <property type="entry name" value="SIGNALPTASE"/>
</dbReference>
<dbReference type="SUPFAM" id="SSF51306">
    <property type="entry name" value="LexA/Signal peptidase"/>
    <property type="match status" value="1"/>
</dbReference>
<dbReference type="PROSITE" id="PS00501">
    <property type="entry name" value="SPASE_I_1"/>
    <property type="match status" value="1"/>
</dbReference>
<evidence type="ECO:0000250" key="1">
    <source>
        <dbReference type="UniProtKB" id="P15367"/>
    </source>
</evidence>
<evidence type="ECO:0000250" key="2">
    <source>
        <dbReference type="UniProtKB" id="P67812"/>
    </source>
</evidence>
<evidence type="ECO:0000255" key="3"/>
<evidence type="ECO:0000305" key="4"/>
<comment type="function">
    <text evidence="1 2">Catalytic component of the signal peptidase complex (SPC) which catalyzes the cleavage of N-terminal signal sequences from nascent proteins as they are translocated into the lumen of the endoplasmic reticulum (By similarity). Specifically cleaves N-terminal signal peptides that contain a hydrophobic alpha-helix (h-region) shorter than 18-20 amino acids (By similarity).</text>
</comment>
<comment type="catalytic activity">
    <reaction evidence="1">
        <text>Cleavage of hydrophobic, N-terminal signal or leader sequences from secreted and periplasmic proteins.</text>
        <dbReference type="EC" id="3.4.21.89"/>
    </reaction>
</comment>
<comment type="subunit">
    <text evidence="1 2">Component of the signal peptidase complex (SPC) composed of a catalytic subunit SEC11 and three accessory subunits SPC1, SPC2 and SPC3 (By similarity). The complex induces a local thinning of the ER membrane which is used to measure the length of the signal peptide (SP) h-region of protein substrates. This ensures the selectivity of the complex towards h-regions shorter than 18-20 amino acids (By similarity). SPC associates with the translocon complex (By similarity).</text>
</comment>
<comment type="subcellular location">
    <subcellularLocation>
        <location evidence="1">Endoplasmic reticulum membrane</location>
        <topology evidence="1">Single-pass type II membrane protein</topology>
    </subcellularLocation>
</comment>
<comment type="domain">
    <text evidence="2">The C-terminal short (CTS) helix is essential for catalytic activity. It may be accommodated as a transmembrane helix in the thinned membrane environment of the complex, similarly to the signal peptide in the complex substrates.</text>
</comment>
<comment type="similarity">
    <text evidence="4">Belongs to the peptidase S26B family.</text>
</comment>
<feature type="chain" id="PRO_0000412336" description="Signal peptidase complex catalytic subunit SEC11">
    <location>
        <begin position="1"/>
        <end position="172"/>
    </location>
</feature>
<feature type="topological domain" description="Cytoplasmic" evidence="4">
    <location>
        <begin position="1"/>
        <end position="14"/>
    </location>
</feature>
<feature type="transmembrane region" description="Helical; Signal-anchor for type II membrane protein" evidence="3">
    <location>
        <begin position="15"/>
        <end position="35"/>
    </location>
</feature>
<feature type="topological domain" description="Lumenal" evidence="4">
    <location>
        <begin position="36"/>
        <end position="172"/>
    </location>
</feature>
<feature type="region of interest" description="C-terminal short (CTS) helix" evidence="2">
    <location>
        <begin position="158"/>
        <end position="169"/>
    </location>
</feature>
<feature type="active site" description="Charge relay system" evidence="1">
    <location>
        <position position="49"/>
    </location>
</feature>
<feature type="active site" description="Charge relay system" evidence="1">
    <location>
        <position position="90"/>
    </location>
</feature>
<feature type="active site" description="Charge relay system" evidence="1">
    <location>
        <position position="115"/>
    </location>
</feature>
<gene>
    <name type="primary">SEC11</name>
    <name type="ORF">MGG_00113</name>
</gene>